<reference key="1">
    <citation type="journal article" date="1996" name="DNA Res.">
        <title>A 570-kb DNA sequence of the Escherichia coli K-12 genome corresponding to the 28.0-40.1 min region on the linkage map.</title>
        <authorList>
            <person name="Aiba H."/>
            <person name="Baba T."/>
            <person name="Fujita K."/>
            <person name="Hayashi K."/>
            <person name="Inada T."/>
            <person name="Isono K."/>
            <person name="Itoh T."/>
            <person name="Kasai H."/>
            <person name="Kashimoto K."/>
            <person name="Kimura S."/>
            <person name="Kitakawa M."/>
            <person name="Kitagawa M."/>
            <person name="Makino K."/>
            <person name="Miki T."/>
            <person name="Mizobuchi K."/>
            <person name="Mori H."/>
            <person name="Mori T."/>
            <person name="Motomura K."/>
            <person name="Nakade S."/>
            <person name="Nakamura Y."/>
            <person name="Nashimoto H."/>
            <person name="Nishio Y."/>
            <person name="Oshima T."/>
            <person name="Saito N."/>
            <person name="Sampei G."/>
            <person name="Seki Y."/>
            <person name="Sivasundaram S."/>
            <person name="Tagami H."/>
            <person name="Takeda J."/>
            <person name="Takemoto K."/>
            <person name="Takeuchi Y."/>
            <person name="Wada C."/>
            <person name="Yamamoto Y."/>
            <person name="Horiuchi T."/>
        </authorList>
    </citation>
    <scope>NUCLEOTIDE SEQUENCE [LARGE SCALE GENOMIC DNA]</scope>
    <source>
        <strain>K12 / W3110 / ATCC 27325 / DSM 5911</strain>
    </source>
</reference>
<reference key="2">
    <citation type="journal article" date="1997" name="Science">
        <title>The complete genome sequence of Escherichia coli K-12.</title>
        <authorList>
            <person name="Blattner F.R."/>
            <person name="Plunkett G. III"/>
            <person name="Bloch C.A."/>
            <person name="Perna N.T."/>
            <person name="Burland V."/>
            <person name="Riley M."/>
            <person name="Collado-Vides J."/>
            <person name="Glasner J.D."/>
            <person name="Rode C.K."/>
            <person name="Mayhew G.F."/>
            <person name="Gregor J."/>
            <person name="Davis N.W."/>
            <person name="Kirkpatrick H.A."/>
            <person name="Goeden M.A."/>
            <person name="Rose D.J."/>
            <person name="Mau B."/>
            <person name="Shao Y."/>
        </authorList>
    </citation>
    <scope>NUCLEOTIDE SEQUENCE [LARGE SCALE GENOMIC DNA]</scope>
    <source>
        <strain>K12 / MG1655 / ATCC 47076</strain>
    </source>
</reference>
<reference key="3">
    <citation type="journal article" date="2006" name="Mol. Syst. Biol.">
        <title>Highly accurate genome sequences of Escherichia coli K-12 strains MG1655 and W3110.</title>
        <authorList>
            <person name="Hayashi K."/>
            <person name="Morooka N."/>
            <person name="Yamamoto Y."/>
            <person name="Fujita K."/>
            <person name="Isono K."/>
            <person name="Choi S."/>
            <person name="Ohtsubo E."/>
            <person name="Baba T."/>
            <person name="Wanner B.L."/>
            <person name="Mori H."/>
            <person name="Horiuchi T."/>
        </authorList>
    </citation>
    <scope>NUCLEOTIDE SEQUENCE [LARGE SCALE GENOMIC DNA]</scope>
    <source>
        <strain>K12 / W3110 / ATCC 27325 / DSM 5911</strain>
    </source>
</reference>
<protein>
    <recommendedName>
        <fullName evidence="1">Prophage lysis protein S homolog EssQ</fullName>
    </recommendedName>
    <alternativeName>
        <fullName>Lysis protein S homolog from lambdoid prophage Qin</fullName>
    </alternativeName>
</protein>
<comment type="similarity">
    <text evidence="1">Belongs to the lambda phage S protein family.</text>
</comment>
<proteinExistence type="inferred from homology"/>
<gene>
    <name type="primary">essQ</name>
    <name type="synonym">ydfS</name>
    <name type="ordered locus">b1556</name>
    <name type="ordered locus">JW5255</name>
</gene>
<dbReference type="EMBL" id="U00096">
    <property type="protein sequence ID" value="AAC74629.2"/>
    <property type="molecule type" value="Genomic_DNA"/>
</dbReference>
<dbReference type="EMBL" id="AP009048">
    <property type="protein sequence ID" value="BAA15255.2"/>
    <property type="molecule type" value="Genomic_DNA"/>
</dbReference>
<dbReference type="PIR" id="G64910">
    <property type="entry name" value="G64910"/>
</dbReference>
<dbReference type="RefSeq" id="NP_416074.4">
    <property type="nucleotide sequence ID" value="NC_000913.3"/>
</dbReference>
<dbReference type="SMR" id="P77237"/>
<dbReference type="BioGRID" id="4262936">
    <property type="interactions" value="12"/>
</dbReference>
<dbReference type="FunCoup" id="P77237">
    <property type="interactions" value="28"/>
</dbReference>
<dbReference type="STRING" id="511145.b1556"/>
<dbReference type="TCDB" id="1.E.1.1.2">
    <property type="family name" value="the p21 holin s (p21 holin) family"/>
</dbReference>
<dbReference type="PaxDb" id="511145-b1556"/>
<dbReference type="EnsemblBacteria" id="AAC74629">
    <property type="protein sequence ID" value="AAC74629"/>
    <property type="gene ID" value="b1556"/>
</dbReference>
<dbReference type="GeneID" id="946093"/>
<dbReference type="KEGG" id="ecj:JW5255"/>
<dbReference type="KEGG" id="eco:b1556"/>
<dbReference type="KEGG" id="ecoc:C3026_08980"/>
<dbReference type="PATRIC" id="fig|511145.12.peg.1627"/>
<dbReference type="EchoBASE" id="EB3592"/>
<dbReference type="eggNOG" id="ENOG5032YQ9">
    <property type="taxonomic scope" value="Bacteria"/>
</dbReference>
<dbReference type="HOGENOM" id="CLU_180637_0_0_6"/>
<dbReference type="InParanoid" id="P77237"/>
<dbReference type="OMA" id="GNAGFWM"/>
<dbReference type="OrthoDB" id="6470800at2"/>
<dbReference type="BioCyc" id="EcoCyc:G6829-MONOMER"/>
<dbReference type="PRO" id="PR:P77237"/>
<dbReference type="Proteomes" id="UP000000625">
    <property type="component" value="Chromosome"/>
</dbReference>
<dbReference type="GO" id="GO:0140911">
    <property type="term" value="F:pore-forming activity"/>
    <property type="evidence" value="ECO:0007669"/>
    <property type="project" value="InterPro"/>
</dbReference>
<dbReference type="GO" id="GO:0001907">
    <property type="term" value="P:symbiont-mediated killing of host cell"/>
    <property type="evidence" value="ECO:0007669"/>
    <property type="project" value="InterPro"/>
</dbReference>
<dbReference type="InterPro" id="IPR007054">
    <property type="entry name" value="Lysis_S"/>
</dbReference>
<dbReference type="Pfam" id="PF04971">
    <property type="entry name" value="Phage_holin_2_1"/>
    <property type="match status" value="1"/>
</dbReference>
<dbReference type="PIRSF" id="PIRSF030786">
    <property type="entry name" value="Lysis_S"/>
    <property type="match status" value="1"/>
</dbReference>
<organism>
    <name type="scientific">Escherichia coli (strain K12)</name>
    <dbReference type="NCBI Taxonomy" id="83333"/>
    <lineage>
        <taxon>Bacteria</taxon>
        <taxon>Pseudomonadati</taxon>
        <taxon>Pseudomonadota</taxon>
        <taxon>Gammaproteobacteria</taxon>
        <taxon>Enterobacterales</taxon>
        <taxon>Enterobacteriaceae</taxon>
        <taxon>Escherichia</taxon>
    </lineage>
</organism>
<name>ESSQ_ECOLI</name>
<sequence>MKSMDKLTTGVAYGTSAGNAGFWALQLLDKVTPSQWAAIGVLGSLVFGLLTYLTNLYFKIKEDRRKAARGE</sequence>
<accession>P77237</accession>
<keyword id="KW-0204">Cytolysis</keyword>
<keyword id="KW-0578">Host cell lysis by virus</keyword>
<keyword id="KW-1185">Reference proteome</keyword>
<keyword id="KW-1188">Viral release from host cell</keyword>
<evidence type="ECO:0000305" key="1"/>
<feature type="chain" id="PRO_0000077657" description="Prophage lysis protein S homolog EssQ">
    <location>
        <begin position="1"/>
        <end position="71"/>
    </location>
</feature>